<evidence type="ECO:0000305" key="1"/>
<accession>P07324</accession>
<proteinExistence type="evidence at protein level"/>
<organism>
    <name type="scientific">Clostridium pasteurianum</name>
    <dbReference type="NCBI Taxonomy" id="1501"/>
    <lineage>
        <taxon>Bacteria</taxon>
        <taxon>Bacillati</taxon>
        <taxon>Bacillota</taxon>
        <taxon>Clostridia</taxon>
        <taxon>Eubacteriales</taxon>
        <taxon>Clostridiaceae</taxon>
        <taxon>Clostridium</taxon>
    </lineage>
</organism>
<keyword id="KW-0001">2Fe-2S</keyword>
<keyword id="KW-0903">Direct protein sequencing</keyword>
<keyword id="KW-0249">Electron transport</keyword>
<keyword id="KW-0408">Iron</keyword>
<keyword id="KW-0411">Iron-sulfur</keyword>
<keyword id="KW-0479">Metal-binding</keyword>
<keyword id="KW-0813">Transport</keyword>
<name>FER2_CLOPA</name>
<sequence length="102" mass="11428">MVNPKHHIFVCTSCRLNGKQQGFCYSKNSVEIVETFMEELDSRDLSSEVMVNNTGCFGICSQGPIVVVYPEGVWYGNVTADDVEEIVESHIENGEVVKRLQI</sequence>
<dbReference type="EMBL" id="Z19005">
    <property type="protein sequence ID" value="CAA79492.1"/>
    <property type="molecule type" value="Genomic_DNA"/>
</dbReference>
<dbReference type="PIR" id="JH0804">
    <property type="entry name" value="FECL2P"/>
</dbReference>
<dbReference type="RefSeq" id="WP_003447890.1">
    <property type="nucleotide sequence ID" value="NZ_LFYL01000003.1"/>
</dbReference>
<dbReference type="SMR" id="P07324"/>
<dbReference type="GeneID" id="93073597"/>
<dbReference type="OrthoDB" id="9800692at2"/>
<dbReference type="GO" id="GO:0051537">
    <property type="term" value="F:2 iron, 2 sulfur cluster binding"/>
    <property type="evidence" value="ECO:0007669"/>
    <property type="project" value="UniProtKB-KW"/>
</dbReference>
<dbReference type="GO" id="GO:0046872">
    <property type="term" value="F:metal ion binding"/>
    <property type="evidence" value="ECO:0007669"/>
    <property type="project" value="UniProtKB-KW"/>
</dbReference>
<dbReference type="CDD" id="cd02980">
    <property type="entry name" value="TRX_Fd_family"/>
    <property type="match status" value="1"/>
</dbReference>
<dbReference type="Gene3D" id="3.40.30.10">
    <property type="entry name" value="Glutaredoxin"/>
    <property type="match status" value="1"/>
</dbReference>
<dbReference type="InterPro" id="IPR048109">
    <property type="entry name" value="Fdxn_Clost-type"/>
</dbReference>
<dbReference type="InterPro" id="IPR036249">
    <property type="entry name" value="Thioredoxin-like_sf"/>
</dbReference>
<dbReference type="NCBIfam" id="NF041612">
    <property type="entry name" value="fdxn_Clost"/>
    <property type="match status" value="1"/>
</dbReference>
<dbReference type="PANTHER" id="PTHR43578">
    <property type="entry name" value="NADH-QUINONE OXIDOREDUCTASE SUBUNIT F"/>
    <property type="match status" value="1"/>
</dbReference>
<dbReference type="PANTHER" id="PTHR43578:SF3">
    <property type="entry name" value="NADH-QUINONE OXIDOREDUCTASE SUBUNIT F"/>
    <property type="match status" value="1"/>
</dbReference>
<dbReference type="Pfam" id="PF01257">
    <property type="entry name" value="2Fe-2S_thioredx"/>
    <property type="match status" value="1"/>
</dbReference>
<dbReference type="SUPFAM" id="SSF52833">
    <property type="entry name" value="Thioredoxin-like"/>
    <property type="match status" value="1"/>
</dbReference>
<reference key="1">
    <citation type="journal article" date="1986" name="Biochemistry">
        <title>Amino acid sequence of [2Fe-2S] ferredoxin from Clostridium pasteurianum.</title>
        <authorList>
            <person name="Meyer J."/>
            <person name="Bruschi M."/>
            <person name="Bonicel J.J."/>
            <person name="Bovier-Lapierre G.E."/>
        </authorList>
    </citation>
    <scope>PROTEIN SEQUENCE</scope>
</reference>
<reference key="2">
    <citation type="journal article" date="1993" name="Biochem. Biophys. Res. Commun.">
        <title>Cloning and expression in Escherichia coli of the gene encoding the [2Fe-2S] ferredoxin from Clostridium pasteurianum.</title>
        <authorList>
            <person name="Fujinaga J."/>
            <person name="Meyer J."/>
        </authorList>
    </citation>
    <scope>NUCLEOTIDE SEQUENCE [GENOMIC DNA]</scope>
    <source>
        <strain>ATCC 6013 / DSM 525 / NCIB 9486 / VKM B-1774 / W5</strain>
    </source>
</reference>
<reference key="3">
    <citation type="journal article" date="1993" name="Biochim. Biophys. Acta">
        <title>Cloning and sequencing of the gene encoding the [2Fe-2S] ferredoxin from Clostridium pasteurianum.</title>
        <authorList>
            <person name="Meyer J."/>
        </authorList>
    </citation>
    <scope>NUCLEOTIDE SEQUENCE [GENOMIC DNA]</scope>
    <source>
        <strain>ATCC 6013 / DSM 525 / NCIB 9486 / VKM B-1774 / W5</strain>
    </source>
</reference>
<reference key="4">
    <citation type="journal article" date="1993" name="Biochem. Biophys. Res. Commun.">
        <title>Mutated forms of a [2Fe-2S] ferredoxin with serine ligands to the iron-sulfur cluster.</title>
        <authorList>
            <person name="Fujinaga J."/>
            <person name="Gaillard J."/>
            <person name="Meyer J."/>
        </authorList>
    </citation>
    <scope>MUTAGENESIS OF CYSTEINE RESIDUES</scope>
</reference>
<reference key="5">
    <citation type="journal article" date="1996" name="Biochemistry">
        <title>Cysteine ligand swapping on a deletable loop of the [2Fe-2S] ferredoxin from Clostridium pasteurianum.</title>
        <authorList>
            <person name="Golinelli M.P."/>
            <person name="Akin L.A."/>
            <person name="Crouse B.R."/>
            <person name="Johnson M.K."/>
            <person name="Meyer J."/>
        </authorList>
    </citation>
    <scope>MUTAGENESIS OF CYSTEINE RESIDUES</scope>
</reference>
<comment type="function">
    <text>Ferredoxins are iron-sulfur proteins that transfer electrons in a wide variety of metabolic reactions.</text>
</comment>
<comment type="cofactor">
    <cofactor>
        <name>[2Fe-2S] cluster</name>
        <dbReference type="ChEBI" id="CHEBI:190135"/>
    </cofactor>
    <text>Binds 1 [2Fe-2S] cluster.</text>
</comment>
<comment type="similarity">
    <text evidence="1">Belongs to the 2Fe2S Shethna-type ferredoxin family.</text>
</comment>
<feature type="chain" id="PRO_0000187248" description="Ferredoxin, 2Fe-2S">
    <location>
        <begin position="1"/>
        <end position="102"/>
    </location>
</feature>
<feature type="binding site">
    <location>
        <position position="11"/>
    </location>
    <ligand>
        <name>[2Fe-2S] cluster</name>
        <dbReference type="ChEBI" id="CHEBI:190135"/>
    </ligand>
</feature>
<feature type="binding site">
    <location>
        <position position="24"/>
    </location>
    <ligand>
        <name>[2Fe-2S] cluster</name>
        <dbReference type="ChEBI" id="CHEBI:190135"/>
    </ligand>
</feature>
<feature type="binding site">
    <location>
        <position position="56"/>
    </location>
    <ligand>
        <name>[2Fe-2S] cluster</name>
        <dbReference type="ChEBI" id="CHEBI:190135"/>
    </ligand>
</feature>
<feature type="binding site">
    <location>
        <position position="60"/>
    </location>
    <ligand>
        <name>[2Fe-2S] cluster</name>
        <dbReference type="ChEBI" id="CHEBI:190135"/>
    </ligand>
</feature>
<protein>
    <recommendedName>
        <fullName>Ferredoxin, 2Fe-2S</fullName>
    </recommendedName>
    <alternativeName>
        <fullName>2FeCpFd</fullName>
    </alternativeName>
</protein>